<dbReference type="EMBL" id="GU292996">
    <property type="protein sequence ID" value="ADB56812.1"/>
    <property type="molecule type" value="mRNA"/>
</dbReference>
<dbReference type="ArachnoServer" id="AS001709">
    <property type="toxin name" value="U10-theraphotoxin-Hhn1c"/>
</dbReference>
<dbReference type="GO" id="GO:0005576">
    <property type="term" value="C:extracellular region"/>
    <property type="evidence" value="ECO:0007669"/>
    <property type="project" value="UniProtKB-SubCell"/>
</dbReference>
<dbReference type="GO" id="GO:0099106">
    <property type="term" value="F:ion channel regulator activity"/>
    <property type="evidence" value="ECO:0007669"/>
    <property type="project" value="UniProtKB-KW"/>
</dbReference>
<dbReference type="GO" id="GO:0090729">
    <property type="term" value="F:toxin activity"/>
    <property type="evidence" value="ECO:0007669"/>
    <property type="project" value="UniProtKB-KW"/>
</dbReference>
<keyword id="KW-1015">Disulfide bond</keyword>
<keyword id="KW-0872">Ion channel impairing toxin</keyword>
<keyword id="KW-0960">Knottin</keyword>
<keyword id="KW-0964">Secreted</keyword>
<keyword id="KW-0732">Signal</keyword>
<keyword id="KW-0800">Toxin</keyword>
<protein>
    <recommendedName>
        <fullName>Hainantoxin-XV-3</fullName>
        <shortName>HNTX-XV-3</shortName>
    </recommendedName>
</protein>
<comment type="function">
    <text>Putative ion channel inhibitor.</text>
</comment>
<comment type="subcellular location">
    <subcellularLocation>
        <location evidence="1">Secreted</location>
    </subcellularLocation>
</comment>
<comment type="tissue specificity">
    <text>Expressed by the venom gland.</text>
</comment>
<comment type="domain">
    <text evidence="4">The presence of a 'disulfide through disulfide knot' structurally defines this protein as a knottin.</text>
</comment>
<comment type="similarity">
    <text>Belongs to the neurotoxin 03 (Tx2) family. 02 subfamily. HNTX-XV sub-subfamily.</text>
</comment>
<sequence length="117" mass="13076">MKLCAVIIASLLVCVAVASSSDNQKEFAQEKEMTREETQSLGEHEKDDEVTGSEERSCIEEWKTCENDCECCGMSTLCAASWVDGHEIKLCRNEGGKLKKVLHFIQKSVSKIRSCKK</sequence>
<reference key="1">
    <citation type="journal article" date="2010" name="J. Proteome Res.">
        <title>Molecular diversification of peptide toxins from the tarantula Haplopelma hainanum (Ornithoctonus hainana) venom based on transcriptomic, peptidomic, and genomic analyses.</title>
        <authorList>
            <person name="Tang X."/>
            <person name="Zhang Y."/>
            <person name="Hu W."/>
            <person name="Xu D."/>
            <person name="Tao H."/>
            <person name="Yang X."/>
            <person name="Li Y."/>
            <person name="Jiang L."/>
            <person name="Liang S."/>
        </authorList>
    </citation>
    <scope>NUCLEOTIDE SEQUENCE [LARGE SCALE MRNA]</scope>
    <source>
        <tissue>Venom gland</tissue>
    </source>
</reference>
<evidence type="ECO:0000250" key="1"/>
<evidence type="ECO:0000255" key="2"/>
<evidence type="ECO:0000256" key="3">
    <source>
        <dbReference type="SAM" id="MobiDB-lite"/>
    </source>
</evidence>
<evidence type="ECO:0000305" key="4"/>
<accession>D2Y2B9</accession>
<proteinExistence type="evidence at transcript level"/>
<feature type="signal peptide" evidence="2">
    <location>
        <begin position="1"/>
        <end position="20"/>
    </location>
</feature>
<feature type="propeptide" id="PRO_0000401021" evidence="1">
    <location>
        <begin position="21"/>
        <end position="56"/>
    </location>
</feature>
<feature type="peptide" id="PRO_0000401022" description="Hainantoxin-XV-3">
    <location>
        <begin position="57"/>
        <end position="117"/>
    </location>
</feature>
<feature type="region of interest" description="Disordered" evidence="3">
    <location>
        <begin position="20"/>
        <end position="55"/>
    </location>
</feature>
<feature type="compositionally biased region" description="Basic and acidic residues" evidence="3">
    <location>
        <begin position="23"/>
        <end position="55"/>
    </location>
</feature>
<feature type="disulfide bond" evidence="4">
    <location>
        <begin position="58"/>
        <end position="72"/>
    </location>
</feature>
<feature type="disulfide bond" evidence="4">
    <location>
        <begin position="65"/>
        <end position="78"/>
    </location>
</feature>
<feature type="disulfide bond" evidence="4">
    <location>
        <begin position="69"/>
        <end position="115"/>
    </location>
</feature>
<feature type="disulfide bond" evidence="4">
    <location>
        <begin position="71"/>
        <end position="91"/>
    </location>
</feature>
<name>TX32D_CYRHA</name>
<organism>
    <name type="scientific">Cyriopagopus hainanus</name>
    <name type="common">Chinese bird spider</name>
    <name type="synonym">Haplopelma hainanum</name>
    <dbReference type="NCBI Taxonomy" id="209901"/>
    <lineage>
        <taxon>Eukaryota</taxon>
        <taxon>Metazoa</taxon>
        <taxon>Ecdysozoa</taxon>
        <taxon>Arthropoda</taxon>
        <taxon>Chelicerata</taxon>
        <taxon>Arachnida</taxon>
        <taxon>Araneae</taxon>
        <taxon>Mygalomorphae</taxon>
        <taxon>Theraphosidae</taxon>
        <taxon>Haplopelma</taxon>
    </lineage>
</organism>